<organism>
    <name type="scientific">Bos taurus</name>
    <name type="common">Bovine</name>
    <dbReference type="NCBI Taxonomy" id="9913"/>
    <lineage>
        <taxon>Eukaryota</taxon>
        <taxon>Metazoa</taxon>
        <taxon>Chordata</taxon>
        <taxon>Craniata</taxon>
        <taxon>Vertebrata</taxon>
        <taxon>Euteleostomi</taxon>
        <taxon>Mammalia</taxon>
        <taxon>Eutheria</taxon>
        <taxon>Laurasiatheria</taxon>
        <taxon>Artiodactyla</taxon>
        <taxon>Ruminantia</taxon>
        <taxon>Pecora</taxon>
        <taxon>Bovidae</taxon>
        <taxon>Bovinae</taxon>
        <taxon>Bos</taxon>
    </lineage>
</organism>
<protein>
    <recommendedName>
        <fullName evidence="2">Guided entry of tail-anchored proteins factor 1</fullName>
    </recommendedName>
    <alternativeName>
        <fullName>Tail-anchored protein insertion receptor WRB</fullName>
    </alternativeName>
    <alternativeName>
        <fullName>Tryptophan-rich basic protein</fullName>
    </alternativeName>
</protein>
<accession>Q3SZ26</accession>
<sequence>MSAAEADRWAWLLVLSFVFGCNVLRILLPSFSFFMSRVLQKDAEQESQMRAEIQGMKQELSTVNMMDEFARYARLERKINKMTDKLKTHVKARTAQLAKIKWVISVAFYILQAALMVSLIWKYYSVPVAVVPSKWITPLDRLVAFPTRVAGGVGITCWILVCNKVVAIVLHPFS</sequence>
<name>GET1_BOVIN</name>
<gene>
    <name evidence="2" type="primary">GET1</name>
    <name evidence="2" type="synonym">WRB</name>
</gene>
<keyword id="KW-0175">Coiled coil</keyword>
<keyword id="KW-0256">Endoplasmic reticulum</keyword>
<keyword id="KW-0472">Membrane</keyword>
<keyword id="KW-1185">Reference proteome</keyword>
<keyword id="KW-0812">Transmembrane</keyword>
<keyword id="KW-1133">Transmembrane helix</keyword>
<comment type="function">
    <text evidence="2">Required for the post-translational delivery of tail-anchored (TA) proteins to the endoplasmic reticulum. Together with CAMLG/GET2, acts as a membrane receptor for soluble GET3/TRC40, which recognizes and selectively binds the transmembrane domain of TA proteins in the cytosol. Required to ensure correct topology and ER insertion of CAMLG.</text>
</comment>
<comment type="subunit">
    <text evidence="2">Component of the Golgi to ER traffic (GET) complex, which is composed of GET1/WRB, CAMLG/GET2 and GET3. Within the complex, GET1 and CAMLG form a heterotetramer which is stabilized by phosphatidylinositol binding and which binds to the GET3 homodimer. Interacts with CAMLG (via C-terminus). GET3 shows a higher affinity for CAMLG than for GET1.</text>
</comment>
<comment type="subcellular location">
    <subcellularLocation>
        <location evidence="2">Endoplasmic reticulum membrane</location>
        <topology evidence="3">Multi-pass membrane protein</topology>
    </subcellularLocation>
</comment>
<comment type="similarity">
    <text evidence="4">Belongs to the WRB/GET1 family.</text>
</comment>
<evidence type="ECO:0000250" key="1"/>
<evidence type="ECO:0000250" key="2">
    <source>
        <dbReference type="UniProtKB" id="O00258"/>
    </source>
</evidence>
<evidence type="ECO:0000255" key="3"/>
<evidence type="ECO:0000305" key="4"/>
<feature type="chain" id="PRO_0000238914" description="Guided entry of tail-anchored proteins factor 1">
    <location>
        <begin position="1"/>
        <end position="174"/>
    </location>
</feature>
<feature type="topological domain" description="Lumenal" evidence="3">
    <location>
        <begin position="1"/>
        <end position="8"/>
    </location>
</feature>
<feature type="transmembrane region" description="Helical" evidence="3">
    <location>
        <begin position="9"/>
        <end position="29"/>
    </location>
</feature>
<feature type="topological domain" description="Cytoplasmic" evidence="3">
    <location>
        <begin position="30"/>
        <end position="99"/>
    </location>
</feature>
<feature type="transmembrane region" description="Helical" evidence="3">
    <location>
        <begin position="100"/>
        <end position="120"/>
    </location>
</feature>
<feature type="topological domain" description="Lumenal" evidence="3">
    <location>
        <begin position="121"/>
        <end position="148"/>
    </location>
</feature>
<feature type="transmembrane region" description="Helical" evidence="3">
    <location>
        <begin position="149"/>
        <end position="169"/>
    </location>
</feature>
<feature type="topological domain" description="Cytoplasmic" evidence="3">
    <location>
        <begin position="170"/>
        <end position="174"/>
    </location>
</feature>
<feature type="region of interest" description="Interaction with GET3/TRC40" evidence="1">
    <location>
        <begin position="39"/>
        <end position="97"/>
    </location>
</feature>
<feature type="coiled-coil region" evidence="3">
    <location>
        <begin position="39"/>
        <end position="94"/>
    </location>
</feature>
<dbReference type="EMBL" id="BC103216">
    <property type="protein sequence ID" value="AAI03217.1"/>
    <property type="molecule type" value="mRNA"/>
</dbReference>
<dbReference type="RefSeq" id="NP_001029531.1">
    <property type="nucleotide sequence ID" value="NM_001034359.2"/>
</dbReference>
<dbReference type="SMR" id="Q3SZ26"/>
<dbReference type="FunCoup" id="Q3SZ26">
    <property type="interactions" value="1497"/>
</dbReference>
<dbReference type="STRING" id="9913.ENSBTAP00000018116"/>
<dbReference type="PaxDb" id="9913-ENSBTAP00000018116"/>
<dbReference type="GeneID" id="509739"/>
<dbReference type="KEGG" id="bta:509739"/>
<dbReference type="CTD" id="7485"/>
<dbReference type="VEuPathDB" id="HostDB:ENSBTAG00000013629"/>
<dbReference type="eggNOG" id="KOG4253">
    <property type="taxonomic scope" value="Eukaryota"/>
</dbReference>
<dbReference type="HOGENOM" id="CLU_121992_0_0_1"/>
<dbReference type="InParanoid" id="Q3SZ26"/>
<dbReference type="OMA" id="AEWIISF"/>
<dbReference type="TreeFam" id="TF314708"/>
<dbReference type="Proteomes" id="UP000009136">
    <property type="component" value="Chromosome 1"/>
</dbReference>
<dbReference type="Bgee" id="ENSBTAG00000013629">
    <property type="expression patterns" value="Expressed in oocyte and 105 other cell types or tissues"/>
</dbReference>
<dbReference type="GO" id="GO:0005789">
    <property type="term" value="C:endoplasmic reticulum membrane"/>
    <property type="evidence" value="ECO:0007669"/>
    <property type="project" value="UniProtKB-SubCell"/>
</dbReference>
<dbReference type="GO" id="GO:0043529">
    <property type="term" value="C:GET complex"/>
    <property type="evidence" value="ECO:0000318"/>
    <property type="project" value="GO_Central"/>
</dbReference>
<dbReference type="GO" id="GO:0043495">
    <property type="term" value="F:protein-membrane adaptor activity"/>
    <property type="evidence" value="ECO:0000318"/>
    <property type="project" value="GO_Central"/>
</dbReference>
<dbReference type="GO" id="GO:0071816">
    <property type="term" value="P:tail-anchored membrane protein insertion into ER membrane"/>
    <property type="evidence" value="ECO:0000318"/>
    <property type="project" value="GO_Central"/>
</dbReference>
<dbReference type="FunFam" id="1.10.287.660:FF:000004">
    <property type="entry name" value="tail-anchored protein insertion receptor WRB"/>
    <property type="match status" value="1"/>
</dbReference>
<dbReference type="Gene3D" id="1.10.287.660">
    <property type="entry name" value="Helix hairpin bin"/>
    <property type="match status" value="1"/>
</dbReference>
<dbReference type="InterPro" id="IPR028945">
    <property type="entry name" value="Get1"/>
</dbReference>
<dbReference type="InterPro" id="IPR029012">
    <property type="entry name" value="Helix_hairpin_bin_sf"/>
</dbReference>
<dbReference type="PANTHER" id="PTHR42650:SF1">
    <property type="entry name" value="GUIDED ENTRY OF TAIL-ANCHORED PROTEINS FACTOR 1"/>
    <property type="match status" value="1"/>
</dbReference>
<dbReference type="PANTHER" id="PTHR42650">
    <property type="entry name" value="TAIL-ANCHORED PROTEIN INSERTION RECEPTOR WRB"/>
    <property type="match status" value="1"/>
</dbReference>
<dbReference type="Pfam" id="PF04420">
    <property type="entry name" value="CHD5"/>
    <property type="match status" value="1"/>
</dbReference>
<reference key="1">
    <citation type="submission" date="2005-08" db="EMBL/GenBank/DDBJ databases">
        <authorList>
            <consortium name="NIH - Mammalian Gene Collection (MGC) project"/>
        </authorList>
    </citation>
    <scope>NUCLEOTIDE SEQUENCE [LARGE SCALE MRNA]</scope>
    <source>
        <strain>Hereford</strain>
        <tissue>Hypothalamus</tissue>
    </source>
</reference>
<proteinExistence type="evidence at transcript level"/>